<gene>
    <name evidence="1" type="primary">ycaR</name>
    <name type="ordered locus">SG0929</name>
</gene>
<protein>
    <recommendedName>
        <fullName evidence="1">UPF0434 protein YcaR</fullName>
    </recommendedName>
</protein>
<accession>B5R8K4</accession>
<reference key="1">
    <citation type="journal article" date="2008" name="Genome Res.">
        <title>Comparative genome analysis of Salmonella enteritidis PT4 and Salmonella gallinarum 287/91 provides insights into evolutionary and host adaptation pathways.</title>
        <authorList>
            <person name="Thomson N.R."/>
            <person name="Clayton D.J."/>
            <person name="Windhorst D."/>
            <person name="Vernikos G."/>
            <person name="Davidson S."/>
            <person name="Churcher C."/>
            <person name="Quail M.A."/>
            <person name="Stevens M."/>
            <person name="Jones M.A."/>
            <person name="Watson M."/>
            <person name="Barron A."/>
            <person name="Layton A."/>
            <person name="Pickard D."/>
            <person name="Kingsley R.A."/>
            <person name="Bignell A."/>
            <person name="Clark L."/>
            <person name="Harris B."/>
            <person name="Ormond D."/>
            <person name="Abdellah Z."/>
            <person name="Brooks K."/>
            <person name="Cherevach I."/>
            <person name="Chillingworth T."/>
            <person name="Woodward J."/>
            <person name="Norberczak H."/>
            <person name="Lord A."/>
            <person name="Arrowsmith C."/>
            <person name="Jagels K."/>
            <person name="Moule S."/>
            <person name="Mungall K."/>
            <person name="Saunders M."/>
            <person name="Whitehead S."/>
            <person name="Chabalgoity J.A."/>
            <person name="Maskell D."/>
            <person name="Humphreys T."/>
            <person name="Roberts M."/>
            <person name="Barrow P.A."/>
            <person name="Dougan G."/>
            <person name="Parkhill J."/>
        </authorList>
    </citation>
    <scope>NUCLEOTIDE SEQUENCE [LARGE SCALE GENOMIC DNA]</scope>
    <source>
        <strain>287/91 / NCTC 13346</strain>
    </source>
</reference>
<organism>
    <name type="scientific">Salmonella gallinarum (strain 287/91 / NCTC 13346)</name>
    <dbReference type="NCBI Taxonomy" id="550538"/>
    <lineage>
        <taxon>Bacteria</taxon>
        <taxon>Pseudomonadati</taxon>
        <taxon>Pseudomonadota</taxon>
        <taxon>Gammaproteobacteria</taxon>
        <taxon>Enterobacterales</taxon>
        <taxon>Enterobacteriaceae</taxon>
        <taxon>Salmonella</taxon>
    </lineage>
</organism>
<evidence type="ECO:0000255" key="1">
    <source>
        <dbReference type="HAMAP-Rule" id="MF_01187"/>
    </source>
</evidence>
<sequence length="60" mass="6856">MDHRLLEIIACPVCNGKLWYNQEQQELICKLDNLAFPLRDGIPVLLENEARALTSDESKS</sequence>
<comment type="similarity">
    <text evidence="1">Belongs to the UPF0434 family.</text>
</comment>
<dbReference type="EMBL" id="AM933173">
    <property type="protein sequence ID" value="CAR36819.1"/>
    <property type="molecule type" value="Genomic_DNA"/>
</dbReference>
<dbReference type="RefSeq" id="WP_000350061.1">
    <property type="nucleotide sequence ID" value="NC_011274.1"/>
</dbReference>
<dbReference type="SMR" id="B5R8K4"/>
<dbReference type="KEGG" id="seg:SG0929"/>
<dbReference type="HOGENOM" id="CLU_155659_3_1_6"/>
<dbReference type="Proteomes" id="UP000008321">
    <property type="component" value="Chromosome"/>
</dbReference>
<dbReference type="GO" id="GO:0005829">
    <property type="term" value="C:cytosol"/>
    <property type="evidence" value="ECO:0007669"/>
    <property type="project" value="TreeGrafter"/>
</dbReference>
<dbReference type="FunFam" id="2.20.25.10:FF:000002">
    <property type="entry name" value="UPF0434 protein YcaR"/>
    <property type="match status" value="1"/>
</dbReference>
<dbReference type="Gene3D" id="2.20.25.10">
    <property type="match status" value="1"/>
</dbReference>
<dbReference type="HAMAP" id="MF_01187">
    <property type="entry name" value="UPF0434"/>
    <property type="match status" value="1"/>
</dbReference>
<dbReference type="InterPro" id="IPR005651">
    <property type="entry name" value="Trm112-like"/>
</dbReference>
<dbReference type="NCBIfam" id="NF008806">
    <property type="entry name" value="PRK11827.1"/>
    <property type="match status" value="1"/>
</dbReference>
<dbReference type="PANTHER" id="PTHR33505:SF4">
    <property type="entry name" value="PROTEIN PREY, MITOCHONDRIAL"/>
    <property type="match status" value="1"/>
</dbReference>
<dbReference type="PANTHER" id="PTHR33505">
    <property type="entry name" value="ZGC:162634"/>
    <property type="match status" value="1"/>
</dbReference>
<dbReference type="Pfam" id="PF03966">
    <property type="entry name" value="Trm112p"/>
    <property type="match status" value="1"/>
</dbReference>
<dbReference type="SUPFAM" id="SSF158997">
    <property type="entry name" value="Trm112p-like"/>
    <property type="match status" value="1"/>
</dbReference>
<feature type="chain" id="PRO_1000138330" description="UPF0434 protein YcaR">
    <location>
        <begin position="1"/>
        <end position="60"/>
    </location>
</feature>
<name>YCAR_SALG2</name>
<proteinExistence type="inferred from homology"/>